<organism>
    <name type="scientific">Canine distemper virus (strain A92-27/4)</name>
    <name type="common">CDV</name>
    <dbReference type="NCBI Taxonomy" id="82826"/>
    <lineage>
        <taxon>Viruses</taxon>
        <taxon>Riboviria</taxon>
        <taxon>Orthornavirae</taxon>
        <taxon>Negarnaviricota</taxon>
        <taxon>Haploviricotina</taxon>
        <taxon>Monjiviricetes</taxon>
        <taxon>Mononegavirales</taxon>
        <taxon>Paramyxoviridae</taxon>
        <taxon>Orthoparamyxovirinae</taxon>
        <taxon>Morbillivirus</taxon>
        <taxon>Morbillivirus canis</taxon>
    </lineage>
</organism>
<accession>Q66001</accession>
<proteinExistence type="inferred from homology"/>
<comment type="function">
    <text evidence="1">Attaches the virus to cell receptors and thereby initiating infection. Binding of H protein to the receptor induces a conformational change that allows the F protein to trigger virion/cell membranes fusion. The cellular receptor might be SLAM, and may explain the lymphotropism of the virus (By similarity).</text>
</comment>
<comment type="subunit">
    <text evidence="1">Binds canine SLAMF1 at the cell surface.</text>
</comment>
<comment type="subcellular location">
    <subcellularLocation>
        <location evidence="3">Virion membrane</location>
        <topology evidence="3">Single-pass type II membrane protein</topology>
    </subcellularLocation>
    <subcellularLocation>
        <location evidence="1">Host cell membrane</location>
        <topology evidence="1">Single-pass type II membrane protein</topology>
    </subcellularLocation>
</comment>
<comment type="similarity">
    <text evidence="3">Belongs to the paramyxoviruses hemagglutinin-neuraminidase family. Non-sialidase subfamily.</text>
</comment>
<comment type="caution">
    <text evidence="3">Morbiliviruses hemagglutinins have no neuraminidase activity.</text>
</comment>
<name>HEMA_CDVA4</name>
<organismHost>
    <name type="scientific">Ailuropoda melanoleuca</name>
    <name type="common">Giant panda</name>
    <dbReference type="NCBI Taxonomy" id="9646"/>
</organismHost>
<organismHost>
    <name type="scientific">Ailurus fulgens</name>
    <name type="common">Himalayan red panda</name>
    <dbReference type="NCBI Taxonomy" id="9649"/>
</organismHost>
<organismHost>
    <name type="scientific">Canis lupus familiaris</name>
    <name type="common">Dog</name>
    <name type="synonym">Canis familiaris</name>
    <dbReference type="NCBI Taxonomy" id="9615"/>
</organismHost>
<organismHost>
    <name type="scientific">Mustela</name>
    <dbReference type="NCBI Taxonomy" id="9665"/>
</organismHost>
<organismHost>
    <name type="scientific">Panthera leo</name>
    <name type="common">Lion</name>
    <dbReference type="NCBI Taxonomy" id="9689"/>
</organismHost>
<organismHost>
    <name type="scientific">Procyon lotor</name>
    <name type="common">Raccoon</name>
    <dbReference type="NCBI Taxonomy" id="9654"/>
</organismHost>
<organismHost>
    <name type="scientific">Zalophus californianus</name>
    <name type="common">California sealion</name>
    <dbReference type="NCBI Taxonomy" id="9704"/>
</organismHost>
<dbReference type="EMBL" id="Z54156">
    <property type="protein sequence ID" value="CAA90867.1"/>
    <property type="molecule type" value="Genomic_RNA"/>
</dbReference>
<dbReference type="SMR" id="Q66001"/>
<dbReference type="GlyCosmos" id="Q66001">
    <property type="glycosylation" value="7 sites, No reported glycans"/>
</dbReference>
<dbReference type="GO" id="GO:0020002">
    <property type="term" value="C:host cell plasma membrane"/>
    <property type="evidence" value="ECO:0007669"/>
    <property type="project" value="UniProtKB-SubCell"/>
</dbReference>
<dbReference type="GO" id="GO:0016020">
    <property type="term" value="C:membrane"/>
    <property type="evidence" value="ECO:0007669"/>
    <property type="project" value="UniProtKB-KW"/>
</dbReference>
<dbReference type="GO" id="GO:0019031">
    <property type="term" value="C:viral envelope"/>
    <property type="evidence" value="ECO:0007669"/>
    <property type="project" value="UniProtKB-KW"/>
</dbReference>
<dbReference type="GO" id="GO:0055036">
    <property type="term" value="C:virion membrane"/>
    <property type="evidence" value="ECO:0007669"/>
    <property type="project" value="UniProtKB-SubCell"/>
</dbReference>
<dbReference type="GO" id="GO:0046789">
    <property type="term" value="F:host cell surface receptor binding"/>
    <property type="evidence" value="ECO:0007669"/>
    <property type="project" value="InterPro"/>
</dbReference>
<dbReference type="GO" id="GO:0046718">
    <property type="term" value="P:symbiont entry into host cell"/>
    <property type="evidence" value="ECO:0007669"/>
    <property type="project" value="UniProtKB-KW"/>
</dbReference>
<dbReference type="GO" id="GO:0019062">
    <property type="term" value="P:virion attachment to host cell"/>
    <property type="evidence" value="ECO:0007669"/>
    <property type="project" value="UniProtKB-KW"/>
</dbReference>
<dbReference type="Gene3D" id="2.120.10.10">
    <property type="match status" value="1"/>
</dbReference>
<dbReference type="InterPro" id="IPR000665">
    <property type="entry name" value="Hemagglutn/HN"/>
</dbReference>
<dbReference type="InterPro" id="IPR036278">
    <property type="entry name" value="Sialidase_sf"/>
</dbReference>
<dbReference type="Pfam" id="PF00423">
    <property type="entry name" value="HN"/>
    <property type="match status" value="1"/>
</dbReference>
<dbReference type="SUPFAM" id="SSF50939">
    <property type="entry name" value="Sialidases"/>
    <property type="match status" value="1"/>
</dbReference>
<feature type="chain" id="PRO_0000142594" description="Hemagglutinin glycoprotein">
    <location>
        <begin position="1"/>
        <end position="607"/>
    </location>
</feature>
<feature type="topological domain" description="Intravirion" evidence="2">
    <location>
        <begin position="1"/>
        <end position="37"/>
    </location>
</feature>
<feature type="transmembrane region" description="Helical" evidence="2">
    <location>
        <begin position="38"/>
        <end position="58"/>
    </location>
</feature>
<feature type="topological domain" description="Virion surface" evidence="2">
    <location>
        <begin position="59"/>
        <end position="607"/>
    </location>
</feature>
<feature type="glycosylation site" description="N-linked (GlcNAc...) asparagine; by host" evidence="2">
    <location>
        <position position="149"/>
    </location>
</feature>
<feature type="glycosylation site" description="N-linked (GlcNAc...) asparagine; by host" evidence="2">
    <location>
        <position position="309"/>
    </location>
</feature>
<feature type="glycosylation site" description="N-linked (GlcNAc...) asparagine; by host" evidence="2">
    <location>
        <position position="391"/>
    </location>
</feature>
<feature type="glycosylation site" description="N-linked (GlcNAc...) asparagine; by host" evidence="2">
    <location>
        <position position="422"/>
    </location>
</feature>
<feature type="glycosylation site" description="N-linked (GlcNAc...) asparagine; by host" evidence="2">
    <location>
        <position position="456"/>
    </location>
</feature>
<feature type="glycosylation site" description="N-linked (GlcNAc...) asparagine; by host" evidence="2">
    <location>
        <position position="587"/>
    </location>
</feature>
<feature type="glycosylation site" description="N-linked (GlcNAc...) asparagine; by host" evidence="2">
    <location>
        <position position="603"/>
    </location>
</feature>
<protein>
    <recommendedName>
        <fullName>Hemagglutinin glycoprotein</fullName>
    </recommendedName>
</protein>
<reference key="1">
    <citation type="journal article" date="1996" name="J. Gen. Virol.">
        <title>Canine distemper virus from diseased large felids: biological properties and phylogenetic relationships.</title>
        <authorList>
            <person name="Harder T.C."/>
            <person name="Kenter M."/>
            <person name="Vos H."/>
            <person name="Siebelink K."/>
            <person name="Huisman W."/>
            <person name="van Amerongen G."/>
            <person name="Orvell C."/>
            <person name="Barrett T."/>
            <person name="Appel M.J.G."/>
            <person name="Osterhaus A.D.M.E."/>
        </authorList>
    </citation>
    <scope>NUCLEOTIDE SEQUENCE [GENOMIC RNA]</scope>
</reference>
<sequence length="607" mass="68260">MLSYQDKVGAFYKDNARANSSRLSLVTEDQGGRRPPYLLFVLLILLVGIMALLAITGVRFHQVSTSNMEFSRLLKEDMEKSEAVHHQVIDVLTPLFKIIGDEIGLRLPQKLNEIKQFILQKTNFFNPNREFDFRDLHWCINPPSKIKVNFTNYCDTIGIRKSIASAANPILLSALSRSRGDIFPPYRCSGATTSVGSVFPLSVSLSMSLISRTSEIINMLTAISDGVYGKTYLLVPDYLEGEFDTQKIRVFEIGFIKRWLNNMPLLQTTNYMVLPENSKAKVCTIAVGELTLASLCVDESTVLLYHDSNGSQGGILVVTLGIFGATPMDQVEEVIPVPHPSVEKIHITNHRGFIKDSIATWMVPALVSEKQEEQKNCLESACQRKSYPMCNQTSWEPFGGGQLPSYGRLTLPLDPSIDLQLNISFTYGPVILNGDGMDYYESPLLDSGWLTIPPKNGTVLGLINKASRGDQFTVIPHVLTFAPRESSGNCYLPIQTSQIMDKDVLTESNLVVLPTQNFIYVIATYDISRGDHAIVYYVYDPIRTISYTHAFRLTTKGRPDFLRIECFVWDDDLWCHQFYRFEADSTNSTTSVENLVRIRFSCNRSKP</sequence>
<keyword id="KW-0325">Glycoprotein</keyword>
<keyword id="KW-0348">Hemagglutinin</keyword>
<keyword id="KW-1032">Host cell membrane</keyword>
<keyword id="KW-1043">Host membrane</keyword>
<keyword id="KW-0945">Host-virus interaction</keyword>
<keyword id="KW-0472">Membrane</keyword>
<keyword id="KW-0735">Signal-anchor</keyword>
<keyword id="KW-0812">Transmembrane</keyword>
<keyword id="KW-1133">Transmembrane helix</keyword>
<keyword id="KW-1161">Viral attachment to host cell</keyword>
<keyword id="KW-0261">Viral envelope protein</keyword>
<keyword id="KW-0946">Virion</keyword>
<keyword id="KW-1160">Virus entry into host cell</keyword>
<gene>
    <name type="primary">H</name>
</gene>
<evidence type="ECO:0000250" key="1"/>
<evidence type="ECO:0000255" key="2"/>
<evidence type="ECO:0000305" key="3"/>